<proteinExistence type="evidence at protein level"/>
<organism evidence="13">
    <name type="scientific">Penaeus aztecus</name>
    <name type="common">Brown shrimp</name>
    <name type="synonym">Farfantepenaeus aztecus</name>
    <dbReference type="NCBI Taxonomy" id="6690"/>
    <lineage>
        <taxon>Eukaryota</taxon>
        <taxon>Metazoa</taxon>
        <taxon>Ecdysozoa</taxon>
        <taxon>Arthropoda</taxon>
        <taxon>Crustacea</taxon>
        <taxon>Multicrustacea</taxon>
        <taxon>Malacostraca</taxon>
        <taxon>Eumalacostraca</taxon>
        <taxon>Eucarida</taxon>
        <taxon>Decapoda</taxon>
        <taxon>Dendrobranchiata</taxon>
        <taxon>Penaeoidea</taxon>
        <taxon>Penaeidae</taxon>
        <taxon>Penaeus</taxon>
    </lineage>
</organism>
<sequence>MDAIKKKMQAMKLEKDNAMDRADTLEQQNKEANNRAEKSEEEVHNLQKRMQQLENDLDQVQESLLKANIQLVEKDKALSNAEGEVAALNRRIQLLEEDLERSEERLNTATTKLAEASQAADESERMRKVLENRSLSDEERMDALENQLKEARFLAEEADRKYDEVARKLAMVEADLERAEERAETGESKIVELEEELRVVGNNLKSLEVSEEKANQREEAYKEQIKTLTNKLKAAEARAEFAERSVQKLQKEVDRLEDELVNEKEKYKSITDELDQTFSELSGY</sequence>
<reference evidence="13" key="1">
    <citation type="journal article" date="2005" name="J. Immunol.">
        <title>Reduced allergenic potency of VR9-1, a mutant of the major shrimp allergen Pen a 1 (tropomyosin).</title>
        <authorList>
            <person name="Reese G."/>
            <person name="Viebranz J."/>
            <person name="Leong-Kee S.M."/>
            <person name="Plante M."/>
            <person name="Lauer I."/>
            <person name="Randow S."/>
            <person name="Moncin M.S."/>
            <person name="Ayuso R."/>
            <person name="Lehrer S.B."/>
            <person name="Vieths S."/>
        </authorList>
    </citation>
    <scope>NUCLEOTIDE SEQUENCE [MRNA]</scope>
    <scope>ALLERGEN</scope>
    <scope>MISCELLANEOUS</scope>
    <scope>REGIONS</scope>
    <scope>MUTAGENESIS OF LEU-46; LEU-53; LEU-95; SER-136; GLU-145; VAL-191; VAL-199; ARG-255; LEU-260; SER-269; THR-277 AND PHE-278</scope>
    <scope>CIRCULAR DICHROISM ANALYSIS</scope>
    <source>
        <tissue evidence="13">Tail muscle</tissue>
    </source>
</reference>
<reference evidence="13" key="2">
    <citation type="journal article" date="2006" name="Clin. Exp. Allergy">
        <title>Structural, immunological and functional properties of natural recombinant Pen a 1, the major allergen of Brown Shrimp, Penaeus aztecus.</title>
        <authorList>
            <person name="Reese G."/>
            <person name="Schicktanz S."/>
            <person name="Lauer I."/>
            <person name="Randow S."/>
            <person name="Luettkopf D."/>
            <person name="Vogel L."/>
            <person name="Lehrer S.B."/>
            <person name="Vieths S."/>
        </authorList>
    </citation>
    <scope>NUCLEOTIDE SEQUENCE [MRNA]</scope>
    <scope>ALLERGEN</scope>
    <scope>CIRCULAR DICHROISM ANALYSIS</scope>
    <source>
        <tissue evidence="13">Tail muscle</tissue>
    </source>
</reference>
<reference key="3">
    <citation type="journal article" date="2002" name="Int. Arch. Allergy Immunol.">
        <title>Identification of continuous, allergenic regions of the major shrimp allergen Pen a 1 (tropomyosin).</title>
        <authorList>
            <person name="Ayuso R."/>
            <person name="Lehrer S.B."/>
            <person name="Reese G."/>
        </authorList>
    </citation>
    <scope>ALLERGEN</scope>
    <scope>REGIONS</scope>
</reference>
<name>TPM_PENAT</name>
<dbReference type="EMBL" id="DQ151457">
    <property type="protein sequence ID" value="AAZ76743.1"/>
    <property type="molecule type" value="mRNA"/>
</dbReference>
<dbReference type="SMR" id="Q3Y8M6"/>
<dbReference type="Allergome" id="3929">
    <property type="allergen name" value="Pen a 1.0102"/>
</dbReference>
<dbReference type="Allergome" id="515">
    <property type="allergen name" value="Pen a 1"/>
</dbReference>
<dbReference type="GO" id="GO:0019863">
    <property type="term" value="F:IgE binding"/>
    <property type="evidence" value="ECO:0007669"/>
    <property type="project" value="UniProtKB-KW"/>
</dbReference>
<dbReference type="GO" id="GO:0042803">
    <property type="term" value="F:protein homodimerization activity"/>
    <property type="evidence" value="ECO:0000250"/>
    <property type="project" value="UniProtKB"/>
</dbReference>
<dbReference type="GO" id="GO:0006937">
    <property type="term" value="P:regulation of muscle contraction"/>
    <property type="evidence" value="ECO:0000250"/>
    <property type="project" value="UniProtKB"/>
</dbReference>
<dbReference type="FunFam" id="1.20.5.170:FF:000005">
    <property type="entry name" value="Tropomyosin alpha-1 chain"/>
    <property type="match status" value="1"/>
</dbReference>
<dbReference type="FunFam" id="1.20.5.170:FF:000001">
    <property type="entry name" value="Tropomyosin alpha-1 chain isoform 1"/>
    <property type="match status" value="1"/>
</dbReference>
<dbReference type="FunFam" id="1.20.5.340:FF:000001">
    <property type="entry name" value="Tropomyosin alpha-1 chain isoform 2"/>
    <property type="match status" value="1"/>
</dbReference>
<dbReference type="Gene3D" id="1.20.5.170">
    <property type="match status" value="2"/>
</dbReference>
<dbReference type="Gene3D" id="1.20.5.340">
    <property type="match status" value="1"/>
</dbReference>
<dbReference type="InterPro" id="IPR000533">
    <property type="entry name" value="Tropomyosin"/>
</dbReference>
<dbReference type="PANTHER" id="PTHR19269">
    <property type="entry name" value="TROPOMYOSIN"/>
    <property type="match status" value="1"/>
</dbReference>
<dbReference type="Pfam" id="PF00261">
    <property type="entry name" value="Tropomyosin"/>
    <property type="match status" value="1"/>
</dbReference>
<dbReference type="PRINTS" id="PR00194">
    <property type="entry name" value="TROPOMYOSIN"/>
</dbReference>
<dbReference type="SUPFAM" id="SSF57997">
    <property type="entry name" value="Tropomyosin"/>
    <property type="match status" value="1"/>
</dbReference>
<dbReference type="PROSITE" id="PS00326">
    <property type="entry name" value="TROPOMYOSIN"/>
    <property type="match status" value="1"/>
</dbReference>
<comment type="function">
    <text evidence="2">Tropomyosin, in association with the troponin complex, plays a central role in the calcium dependent regulation of muscle contraction.</text>
</comment>
<comment type="subunit">
    <text evidence="1">Homodimer.</text>
</comment>
<comment type="domain">
    <text evidence="12">The molecule is in a coiled coil structure that is formed by 2 polypeptide chains. The sequence exhibits a prominent seven-residues periodicity.</text>
</comment>
<comment type="allergen">
    <text evidence="6 7 8">Causes an allergic reaction in human. Binds to IgE of atopic shrimp-allergic patients (PubMed:11893851, PubMed:16339577, PubMed:16630158). Binds to IgE in 100% of the 18 patients tested (PubMed:11893851). Causes release of beta-hexosaminidase from wild-type and humanized rat basophil leukemia (RBL) cells (PubMed:16339577, PubMed:16630158).</text>
</comment>
<comment type="miscellaneous">
    <text evidence="7">Constructed epitope mutant has significantly reduced allergenic potency, and hence could represent a candidate vaccine for treatment of shrimp food allergy.</text>
</comment>
<comment type="similarity">
    <text evidence="4 12">Belongs to the tropomyosin family.</text>
</comment>
<protein>
    <recommendedName>
        <fullName evidence="12">Tropomyosin Pen a 1.0102</fullName>
    </recommendedName>
    <alternativeName>
        <fullName evidence="9 10 11">Allergen Pen a 1</fullName>
    </alternativeName>
    <alternativeName>
        <fullName evidence="9 10">Tropomyosin Pen a 1</fullName>
    </alternativeName>
    <allergenName evidence="12">Pen a 1.0102</allergenName>
</protein>
<keyword id="KW-0020">Allergen</keyword>
<keyword id="KW-0175">Coiled coil</keyword>
<keyword id="KW-0389">IgE-binding protein</keyword>
<keyword id="KW-0514">Muscle protein</keyword>
<keyword id="KW-0677">Repeat</keyword>
<feature type="chain" id="PRO_0000447228" description="Tropomyosin Pen a 1.0102">
    <location>
        <begin position="1"/>
        <end position="284"/>
    </location>
</feature>
<feature type="region of interest" description="Disordered" evidence="5">
    <location>
        <begin position="1"/>
        <end position="51"/>
    </location>
</feature>
<feature type="region of interest" description="IgE-binding" evidence="6 7">
    <location>
        <begin position="43"/>
        <end position="57"/>
    </location>
</feature>
<feature type="region of interest" description="IgE-binding" evidence="6 7">
    <location>
        <begin position="85"/>
        <end position="105"/>
    </location>
</feature>
<feature type="region of interest" description="IgE-binding" evidence="6 7">
    <location>
        <begin position="133"/>
        <end position="153"/>
    </location>
</feature>
<feature type="region of interest" description="IgE-binding" evidence="6 7">
    <location>
        <begin position="187"/>
        <end position="202"/>
    </location>
</feature>
<feature type="region of interest" description="IgE-binding" evidence="6">
    <location>
        <begin position="247"/>
        <end position="284"/>
    </location>
</feature>
<feature type="region of interest" description="IgE-binding" evidence="7">
    <location>
        <begin position="249"/>
        <end position="260"/>
    </location>
</feature>
<feature type="region of interest" description="IgE-binding" evidence="7">
    <location>
        <begin position="266"/>
        <end position="281"/>
    </location>
</feature>
<feature type="coiled-coil region" evidence="3">
    <location>
        <begin position="1"/>
        <end position="273"/>
    </location>
</feature>
<feature type="compositionally biased region" description="Basic and acidic residues" evidence="5">
    <location>
        <begin position="12"/>
        <end position="45"/>
    </location>
</feature>
<feature type="mutagenesis site" description="Nearly complete loss of allergenicity; when associated with T-53, V-95, L-136, D-145, S-191, N-199, D-255, V-260, F-269, A-277 and L-278." evidence="7">
    <original>L</original>
    <variation>M</variation>
    <location>
        <position position="46"/>
    </location>
</feature>
<feature type="mutagenesis site" description="Nearly complete loss of allergenicity; when associated with M-46, V-95, L-136, D-145, S-191, N-199, D-255, V-260, F-269, A-277 and L-278." evidence="7">
    <original>L</original>
    <variation>T</variation>
    <location>
        <position position="53"/>
    </location>
</feature>
<feature type="mutagenesis site" description="Nearly complete loss of allergenicity; when associated with M-46, T-53, L-136, D-145, S-191, N-199, D-255, V-260, F-269, A-277 and L-278." evidence="7">
    <original>L</original>
    <variation>V</variation>
    <location>
        <position position="95"/>
    </location>
</feature>
<feature type="mutagenesis site" description="Nearly complete loss of allergenicity; when associated with M-46, T-53, V-95, D-145, S-191, N-199, D-255, V-260, F-269, A-277 and L-278." evidence="7">
    <original>S</original>
    <variation>L</variation>
    <location>
        <position position="136"/>
    </location>
</feature>
<feature type="mutagenesis site" description="Nearly complete loss of allergenicity; when associated with M-46, T-53, V-95, L-136, S-191, N-199, D-255, V-260, F-269, A-277 and L-278." evidence="7">
    <original>E</original>
    <variation>D</variation>
    <location>
        <position position="145"/>
    </location>
</feature>
<feature type="mutagenesis site" description="Nearly complete loss of allergenicity; when associated with M-46, T-53, V-95, L-136, D-145, N-199, D-255, V-260, F-269, A-277 and L-278." evidence="7">
    <original>V</original>
    <variation>S</variation>
    <location>
        <position position="191"/>
    </location>
</feature>
<feature type="mutagenesis site" description="Nearly complete loss of allergenicity; when associated with M-46, T-53, V-95, L-136, D-145, S-191, D-255, V-260, F-269, A-277 and L-278." evidence="7">
    <original>V</original>
    <variation>N</variation>
    <location>
        <position position="199"/>
    </location>
</feature>
<feature type="mutagenesis site" description="Nearly complete loss of allergenicity; when associated with M-46, T-53, V-95, L-136, D-145, S-191, N-199, V-260, F-269, A-277 and L-278." evidence="7">
    <original>R</original>
    <variation>D</variation>
    <location>
        <position position="255"/>
    </location>
</feature>
<feature type="mutagenesis site" description="Nearly complete loss of allergenicity; when associated with M-46, T-53, V-95, L-136, D-145, S-191, N-199, D-255, F-269, A-277 and L-278." evidence="7">
    <original>L</original>
    <variation>V</variation>
    <location>
        <position position="260"/>
    </location>
</feature>
<feature type="mutagenesis site" description="Nearly complete loss of allergenicity; when associated with M-46, T-53, V-95, L-136, D-145, S-191, N-199, D-255, V-260, A-277 and L-278." evidence="7">
    <original>S</original>
    <variation>F</variation>
    <location>
        <position position="269"/>
    </location>
</feature>
<feature type="mutagenesis site" description="Nearly complete loss of allergenicity; when associated with M-46, T-53, V-95, L-136, D-145, S-191, N-199, D-255, V-260, F-269 and L-278." evidence="7">
    <original>T</original>
    <variation>A</variation>
    <location>
        <position position="277"/>
    </location>
</feature>
<feature type="mutagenesis site" description="Nearly complete loss of allergenicity; when associated with M-46, T-53, V-95, L-136, D-145, S-191, N-199, D-255, V-260, F-269 and A-277." evidence="7">
    <original>F</original>
    <variation>L</variation>
    <location>
        <position position="278"/>
    </location>
</feature>
<evidence type="ECO:0000250" key="1">
    <source>
        <dbReference type="UniProtKB" id="A2V735"/>
    </source>
</evidence>
<evidence type="ECO:0000250" key="2">
    <source>
        <dbReference type="UniProtKB" id="Q22866"/>
    </source>
</evidence>
<evidence type="ECO:0000255" key="3"/>
<evidence type="ECO:0000255" key="4">
    <source>
        <dbReference type="RuleBase" id="RU004515"/>
    </source>
</evidence>
<evidence type="ECO:0000256" key="5">
    <source>
        <dbReference type="SAM" id="MobiDB-lite"/>
    </source>
</evidence>
<evidence type="ECO:0000269" key="6">
    <source>
    </source>
</evidence>
<evidence type="ECO:0000269" key="7">
    <source>
    </source>
</evidence>
<evidence type="ECO:0000269" key="8">
    <source>
    </source>
</evidence>
<evidence type="ECO:0000303" key="9">
    <source>
    </source>
</evidence>
<evidence type="ECO:0000303" key="10">
    <source>
    </source>
</evidence>
<evidence type="ECO:0000303" key="11">
    <source>
    </source>
</evidence>
<evidence type="ECO:0000305" key="12"/>
<evidence type="ECO:0000312" key="13">
    <source>
        <dbReference type="EMBL" id="AAZ76743.1"/>
    </source>
</evidence>
<accession>Q3Y8M6</accession>